<organism>
    <name type="scientific">Coxiella burnetii (strain CbuG_Q212)</name>
    <name type="common">Coxiella burnetii (strain Q212)</name>
    <dbReference type="NCBI Taxonomy" id="434923"/>
    <lineage>
        <taxon>Bacteria</taxon>
        <taxon>Pseudomonadati</taxon>
        <taxon>Pseudomonadota</taxon>
        <taxon>Gammaproteobacteria</taxon>
        <taxon>Legionellales</taxon>
        <taxon>Coxiellaceae</taxon>
        <taxon>Coxiella</taxon>
    </lineage>
</organism>
<reference key="1">
    <citation type="journal article" date="2009" name="Infect. Immun.">
        <title>Comparative genomics reveal extensive transposon-mediated genomic plasticity and diversity among potential effector proteins within the genus Coxiella.</title>
        <authorList>
            <person name="Beare P.A."/>
            <person name="Unsworth N."/>
            <person name="Andoh M."/>
            <person name="Voth D.E."/>
            <person name="Omsland A."/>
            <person name="Gilk S.D."/>
            <person name="Williams K.P."/>
            <person name="Sobral B.W."/>
            <person name="Kupko J.J. III"/>
            <person name="Porcella S.F."/>
            <person name="Samuel J.E."/>
            <person name="Heinzen R.A."/>
        </authorList>
    </citation>
    <scope>NUCLEOTIDE SEQUENCE [LARGE SCALE GENOMIC DNA]</scope>
    <source>
        <strain>CbuG_Q212</strain>
    </source>
</reference>
<sequence>MIARILDGRTCAEKVKARVKENIRLLQEKGLPSPGLAVILVGNDPASATYVAHKERACQAVGIRSTVYRMPNTITESELASKIDECNRDSNTHGILLQLPLPAHIDSANLLERIRPDKDVDGFHPYNLGRLVQRRPALRPCTPYGVMTLLTETHENLEGKHAVIVGASNIVGRPMALELLLAKCTVTVCHRFTRDLAEHVKSAELLIVAIGKPGIIQSEWIKPGAIVIDVGFSRLSPNKIAGDIDFETAKERASWITPVPGGVGPMTVATLLENTLQAAQTFL</sequence>
<dbReference type="EC" id="1.5.1.5" evidence="1"/>
<dbReference type="EC" id="3.5.4.9" evidence="1"/>
<dbReference type="EMBL" id="CP001019">
    <property type="protein sequence ID" value="ACJ18970.1"/>
    <property type="molecule type" value="Genomic_DNA"/>
</dbReference>
<dbReference type="RefSeq" id="WP_012570385.1">
    <property type="nucleotide sequence ID" value="NC_011527.1"/>
</dbReference>
<dbReference type="SMR" id="B6J1Z2"/>
<dbReference type="KEGG" id="cbg:CbuG_1693"/>
<dbReference type="HOGENOM" id="CLU_034045_2_1_6"/>
<dbReference type="UniPathway" id="UPA00193"/>
<dbReference type="GO" id="GO:0005829">
    <property type="term" value="C:cytosol"/>
    <property type="evidence" value="ECO:0007669"/>
    <property type="project" value="TreeGrafter"/>
</dbReference>
<dbReference type="GO" id="GO:0004477">
    <property type="term" value="F:methenyltetrahydrofolate cyclohydrolase activity"/>
    <property type="evidence" value="ECO:0007669"/>
    <property type="project" value="UniProtKB-UniRule"/>
</dbReference>
<dbReference type="GO" id="GO:0004488">
    <property type="term" value="F:methylenetetrahydrofolate dehydrogenase (NADP+) activity"/>
    <property type="evidence" value="ECO:0007669"/>
    <property type="project" value="UniProtKB-UniRule"/>
</dbReference>
<dbReference type="GO" id="GO:0000105">
    <property type="term" value="P:L-histidine biosynthetic process"/>
    <property type="evidence" value="ECO:0007669"/>
    <property type="project" value="UniProtKB-KW"/>
</dbReference>
<dbReference type="GO" id="GO:0009086">
    <property type="term" value="P:methionine biosynthetic process"/>
    <property type="evidence" value="ECO:0007669"/>
    <property type="project" value="UniProtKB-KW"/>
</dbReference>
<dbReference type="GO" id="GO:0006164">
    <property type="term" value="P:purine nucleotide biosynthetic process"/>
    <property type="evidence" value="ECO:0007669"/>
    <property type="project" value="UniProtKB-KW"/>
</dbReference>
<dbReference type="GO" id="GO:0035999">
    <property type="term" value="P:tetrahydrofolate interconversion"/>
    <property type="evidence" value="ECO:0007669"/>
    <property type="project" value="UniProtKB-UniRule"/>
</dbReference>
<dbReference type="CDD" id="cd01080">
    <property type="entry name" value="NAD_bind_m-THF_DH_Cyclohyd"/>
    <property type="match status" value="1"/>
</dbReference>
<dbReference type="FunFam" id="3.40.50.10860:FF:000001">
    <property type="entry name" value="Bifunctional protein FolD"/>
    <property type="match status" value="1"/>
</dbReference>
<dbReference type="FunFam" id="3.40.50.720:FF:000006">
    <property type="entry name" value="Bifunctional protein FolD"/>
    <property type="match status" value="1"/>
</dbReference>
<dbReference type="Gene3D" id="3.40.50.10860">
    <property type="entry name" value="Leucine Dehydrogenase, chain A, domain 1"/>
    <property type="match status" value="1"/>
</dbReference>
<dbReference type="Gene3D" id="3.40.50.720">
    <property type="entry name" value="NAD(P)-binding Rossmann-like Domain"/>
    <property type="match status" value="1"/>
</dbReference>
<dbReference type="HAMAP" id="MF_01576">
    <property type="entry name" value="THF_DHG_CYH"/>
    <property type="match status" value="1"/>
</dbReference>
<dbReference type="InterPro" id="IPR046346">
    <property type="entry name" value="Aminoacid_DH-like_N_sf"/>
</dbReference>
<dbReference type="InterPro" id="IPR036291">
    <property type="entry name" value="NAD(P)-bd_dom_sf"/>
</dbReference>
<dbReference type="InterPro" id="IPR000672">
    <property type="entry name" value="THF_DH/CycHdrlase"/>
</dbReference>
<dbReference type="InterPro" id="IPR020630">
    <property type="entry name" value="THF_DH/CycHdrlase_cat_dom"/>
</dbReference>
<dbReference type="InterPro" id="IPR020867">
    <property type="entry name" value="THF_DH/CycHdrlase_CS"/>
</dbReference>
<dbReference type="InterPro" id="IPR020631">
    <property type="entry name" value="THF_DH/CycHdrlase_NAD-bd_dom"/>
</dbReference>
<dbReference type="NCBIfam" id="NF008058">
    <property type="entry name" value="PRK10792.1"/>
    <property type="match status" value="1"/>
</dbReference>
<dbReference type="NCBIfam" id="NF010783">
    <property type="entry name" value="PRK14186.1"/>
    <property type="match status" value="1"/>
</dbReference>
<dbReference type="PANTHER" id="PTHR48099:SF5">
    <property type="entry name" value="C-1-TETRAHYDROFOLATE SYNTHASE, CYTOPLASMIC"/>
    <property type="match status" value="1"/>
</dbReference>
<dbReference type="PANTHER" id="PTHR48099">
    <property type="entry name" value="C-1-TETRAHYDROFOLATE SYNTHASE, CYTOPLASMIC-RELATED"/>
    <property type="match status" value="1"/>
</dbReference>
<dbReference type="Pfam" id="PF00763">
    <property type="entry name" value="THF_DHG_CYH"/>
    <property type="match status" value="1"/>
</dbReference>
<dbReference type="Pfam" id="PF02882">
    <property type="entry name" value="THF_DHG_CYH_C"/>
    <property type="match status" value="1"/>
</dbReference>
<dbReference type="PRINTS" id="PR00085">
    <property type="entry name" value="THFDHDRGNASE"/>
</dbReference>
<dbReference type="SUPFAM" id="SSF53223">
    <property type="entry name" value="Aminoacid dehydrogenase-like, N-terminal domain"/>
    <property type="match status" value="1"/>
</dbReference>
<dbReference type="SUPFAM" id="SSF51735">
    <property type="entry name" value="NAD(P)-binding Rossmann-fold domains"/>
    <property type="match status" value="1"/>
</dbReference>
<dbReference type="PROSITE" id="PS00767">
    <property type="entry name" value="THF_DHG_CYH_2"/>
    <property type="match status" value="1"/>
</dbReference>
<name>FOLD_COXB2</name>
<comment type="function">
    <text evidence="1">Catalyzes the oxidation of 5,10-methylenetetrahydrofolate to 5,10-methenyltetrahydrofolate and then the hydrolysis of 5,10-methenyltetrahydrofolate to 10-formyltetrahydrofolate.</text>
</comment>
<comment type="catalytic activity">
    <reaction evidence="1">
        <text>(6R)-5,10-methylene-5,6,7,8-tetrahydrofolate + NADP(+) = (6R)-5,10-methenyltetrahydrofolate + NADPH</text>
        <dbReference type="Rhea" id="RHEA:22812"/>
        <dbReference type="ChEBI" id="CHEBI:15636"/>
        <dbReference type="ChEBI" id="CHEBI:57455"/>
        <dbReference type="ChEBI" id="CHEBI:57783"/>
        <dbReference type="ChEBI" id="CHEBI:58349"/>
        <dbReference type="EC" id="1.5.1.5"/>
    </reaction>
</comment>
<comment type="catalytic activity">
    <reaction evidence="1">
        <text>(6R)-5,10-methenyltetrahydrofolate + H2O = (6R)-10-formyltetrahydrofolate + H(+)</text>
        <dbReference type="Rhea" id="RHEA:23700"/>
        <dbReference type="ChEBI" id="CHEBI:15377"/>
        <dbReference type="ChEBI" id="CHEBI:15378"/>
        <dbReference type="ChEBI" id="CHEBI:57455"/>
        <dbReference type="ChEBI" id="CHEBI:195366"/>
        <dbReference type="EC" id="3.5.4.9"/>
    </reaction>
</comment>
<comment type="pathway">
    <text evidence="1">One-carbon metabolism; tetrahydrofolate interconversion.</text>
</comment>
<comment type="subunit">
    <text evidence="1">Homodimer.</text>
</comment>
<comment type="similarity">
    <text evidence="1">Belongs to the tetrahydrofolate dehydrogenase/cyclohydrolase family.</text>
</comment>
<evidence type="ECO:0000255" key="1">
    <source>
        <dbReference type="HAMAP-Rule" id="MF_01576"/>
    </source>
</evidence>
<feature type="chain" id="PRO_1000196758" description="Bifunctional protein FolD">
    <location>
        <begin position="1"/>
        <end position="283"/>
    </location>
</feature>
<feature type="binding site" evidence="1">
    <location>
        <begin position="166"/>
        <end position="168"/>
    </location>
    <ligand>
        <name>NADP(+)</name>
        <dbReference type="ChEBI" id="CHEBI:58349"/>
    </ligand>
</feature>
<accession>B6J1Z2</accession>
<gene>
    <name evidence="1" type="primary">folD</name>
    <name type="ordered locus">CbuG_1693</name>
</gene>
<proteinExistence type="inferred from homology"/>
<keyword id="KW-0028">Amino-acid biosynthesis</keyword>
<keyword id="KW-0368">Histidine biosynthesis</keyword>
<keyword id="KW-0378">Hydrolase</keyword>
<keyword id="KW-0486">Methionine biosynthesis</keyword>
<keyword id="KW-0511">Multifunctional enzyme</keyword>
<keyword id="KW-0521">NADP</keyword>
<keyword id="KW-0554">One-carbon metabolism</keyword>
<keyword id="KW-0560">Oxidoreductase</keyword>
<keyword id="KW-0658">Purine biosynthesis</keyword>
<protein>
    <recommendedName>
        <fullName evidence="1">Bifunctional protein FolD</fullName>
    </recommendedName>
    <domain>
        <recommendedName>
            <fullName evidence="1">Methylenetetrahydrofolate dehydrogenase</fullName>
            <ecNumber evidence="1">1.5.1.5</ecNumber>
        </recommendedName>
    </domain>
    <domain>
        <recommendedName>
            <fullName evidence="1">Methenyltetrahydrofolate cyclohydrolase</fullName>
            <ecNumber evidence="1">3.5.4.9</ecNumber>
        </recommendedName>
    </domain>
</protein>